<protein>
    <recommendedName>
        <fullName>Targeting protein for Xklp2</fullName>
    </recommendedName>
</protein>
<feature type="chain" id="PRO_0000393116" description="Targeting protein for Xklp2">
    <location>
        <begin position="1"/>
        <end position="709"/>
    </location>
</feature>
<feature type="region of interest" description="Disordered" evidence="2">
    <location>
        <begin position="40"/>
        <end position="189"/>
    </location>
</feature>
<feature type="region of interest" description="Disordered" evidence="2">
    <location>
        <begin position="229"/>
        <end position="249"/>
    </location>
</feature>
<feature type="region of interest" description="Disordered" evidence="2">
    <location>
        <begin position="309"/>
        <end position="347"/>
    </location>
</feature>
<feature type="region of interest" description="Disordered" evidence="2">
    <location>
        <begin position="641"/>
        <end position="668"/>
    </location>
</feature>
<feature type="compositionally biased region" description="Basic residues" evidence="2">
    <location>
        <begin position="87"/>
        <end position="105"/>
    </location>
</feature>
<feature type="compositionally biased region" description="Basic and acidic residues" evidence="2">
    <location>
        <begin position="106"/>
        <end position="117"/>
    </location>
</feature>
<feature type="compositionally biased region" description="Basic and acidic residues" evidence="2">
    <location>
        <begin position="179"/>
        <end position="189"/>
    </location>
</feature>
<feature type="compositionally biased region" description="Polar residues" evidence="2">
    <location>
        <begin position="336"/>
        <end position="345"/>
    </location>
</feature>
<feature type="modified residue" description="Phosphoserine; by plk1" evidence="1">
    <location>
        <position position="206"/>
    </location>
</feature>
<proteinExistence type="evidence at transcript level"/>
<name>TPX2_XENTR</name>
<reference key="1">
    <citation type="submission" date="2007-03" db="EMBL/GenBank/DDBJ databases">
        <authorList>
            <consortium name="NIH - Xenopus Gene Collection (XGC) project"/>
        </authorList>
    </citation>
    <scope>NUCLEOTIDE SEQUENCE [LARGE SCALE MRNA]</scope>
    <source>
        <tissue>Embryo</tissue>
    </source>
</reference>
<dbReference type="EMBL" id="BC135342">
    <property type="protein sequence ID" value="AAI35343.1"/>
    <property type="molecule type" value="mRNA"/>
</dbReference>
<dbReference type="RefSeq" id="NP_001096233.1">
    <property type="nucleotide sequence ID" value="NM_001102763.1"/>
</dbReference>
<dbReference type="SMR" id="A4IH24"/>
<dbReference type="FunCoup" id="A4IH24">
    <property type="interactions" value="713"/>
</dbReference>
<dbReference type="STRING" id="8364.ENSXETP00000034886"/>
<dbReference type="PaxDb" id="8364-ENSXETP00000005433"/>
<dbReference type="DNASU" id="100124787"/>
<dbReference type="GeneID" id="100124787"/>
<dbReference type="KEGG" id="xtr:100124787"/>
<dbReference type="AGR" id="Xenbase:XB-GENE-5810264"/>
<dbReference type="CTD" id="22974"/>
<dbReference type="Xenbase" id="XB-GENE-5810264">
    <property type="gene designation" value="tpx2"/>
</dbReference>
<dbReference type="eggNOG" id="ENOG502QVQS">
    <property type="taxonomic scope" value="Eukaryota"/>
</dbReference>
<dbReference type="InParanoid" id="A4IH24"/>
<dbReference type="OMA" id="GRHTVSC"/>
<dbReference type="OrthoDB" id="1684416at2759"/>
<dbReference type="Reactome" id="R-XTR-6804756">
    <property type="pathway name" value="Regulation of TP53 Activity through Phosphorylation"/>
</dbReference>
<dbReference type="Reactome" id="R-XTR-8854518">
    <property type="pathway name" value="AURKA Activation by TPX2"/>
</dbReference>
<dbReference type="Proteomes" id="UP000008143">
    <property type="component" value="Chromosome 10"/>
</dbReference>
<dbReference type="GO" id="GO:0005737">
    <property type="term" value="C:cytoplasm"/>
    <property type="evidence" value="ECO:0007669"/>
    <property type="project" value="UniProtKB-KW"/>
</dbReference>
<dbReference type="GO" id="GO:0005874">
    <property type="term" value="C:microtubule"/>
    <property type="evidence" value="ECO:0007669"/>
    <property type="project" value="UniProtKB-KW"/>
</dbReference>
<dbReference type="GO" id="GO:0005634">
    <property type="term" value="C:nucleus"/>
    <property type="evidence" value="ECO:0007669"/>
    <property type="project" value="UniProtKB-SubCell"/>
</dbReference>
<dbReference type="GO" id="GO:0000922">
    <property type="term" value="C:spindle pole"/>
    <property type="evidence" value="ECO:0007669"/>
    <property type="project" value="UniProtKB-SubCell"/>
</dbReference>
<dbReference type="GO" id="GO:0051301">
    <property type="term" value="P:cell division"/>
    <property type="evidence" value="ECO:0007669"/>
    <property type="project" value="UniProtKB-KW"/>
</dbReference>
<dbReference type="GO" id="GO:0060236">
    <property type="term" value="P:regulation of mitotic spindle organization"/>
    <property type="evidence" value="ECO:0007669"/>
    <property type="project" value="InterPro"/>
</dbReference>
<dbReference type="InterPro" id="IPR015128">
    <property type="entry name" value="Aurora-A-bd"/>
</dbReference>
<dbReference type="InterPro" id="IPR027329">
    <property type="entry name" value="TPX2_C"/>
</dbReference>
<dbReference type="InterPro" id="IPR027330">
    <property type="entry name" value="TPX2_central_dom"/>
</dbReference>
<dbReference type="InterPro" id="IPR009675">
    <property type="entry name" value="TPX2_fam"/>
</dbReference>
<dbReference type="PANTHER" id="PTHR14326">
    <property type="entry name" value="TARGETING PROTEIN FOR XKLP2"/>
    <property type="match status" value="1"/>
</dbReference>
<dbReference type="PANTHER" id="PTHR14326:SF44">
    <property type="entry name" value="TARGETING PROTEIN FOR XKLP2"/>
    <property type="match status" value="1"/>
</dbReference>
<dbReference type="Pfam" id="PF09041">
    <property type="entry name" value="Aurora-A_bind"/>
    <property type="match status" value="1"/>
</dbReference>
<dbReference type="Pfam" id="PF06886">
    <property type="entry name" value="TPX2"/>
    <property type="match status" value="2"/>
</dbReference>
<dbReference type="Pfam" id="PF12214">
    <property type="entry name" value="TPX2_importin"/>
    <property type="match status" value="1"/>
</dbReference>
<organism>
    <name type="scientific">Xenopus tropicalis</name>
    <name type="common">Western clawed frog</name>
    <name type="synonym">Silurana tropicalis</name>
    <dbReference type="NCBI Taxonomy" id="8364"/>
    <lineage>
        <taxon>Eukaryota</taxon>
        <taxon>Metazoa</taxon>
        <taxon>Chordata</taxon>
        <taxon>Craniata</taxon>
        <taxon>Vertebrata</taxon>
        <taxon>Euteleostomi</taxon>
        <taxon>Amphibia</taxon>
        <taxon>Batrachia</taxon>
        <taxon>Anura</taxon>
        <taxon>Pipoidea</taxon>
        <taxon>Pipidae</taxon>
        <taxon>Xenopodinae</taxon>
        <taxon>Xenopus</taxon>
        <taxon>Silurana</taxon>
    </lineage>
</organism>
<gene>
    <name type="primary">tpx2</name>
</gene>
<comment type="function">
    <text evidence="1">Spindle assembly factor. Required for normal assembly of mitotic spindles. Mediates the binding kif15 and aurka to spindle microtubules. Required for targeting kif15 to microtubule minus ends. Activates aurka by promoting its autophosphorylation and protects the phosphorylated residue against dephosphorylation (By similarity).</text>
</comment>
<comment type="subunit">
    <text evidence="1">Associates with microtubules. Interacts with aurka and plk1. Interacts with kif15 (By similarity).</text>
</comment>
<comment type="subcellular location">
    <subcellularLocation>
        <location evidence="1">Nucleus</location>
    </subcellularLocation>
    <subcellularLocation>
        <location evidence="1">Cytoplasm</location>
        <location evidence="1">Cytoskeleton</location>
        <location evidence="1">Spindle</location>
    </subcellularLocation>
    <subcellularLocation>
        <location evidence="1">Cytoplasm</location>
        <location evidence="1">Cytoskeleton</location>
        <location evidence="1">Spindle pole</location>
    </subcellularLocation>
    <text evidence="1">Localizes during metaphase on spindle microtubules, with a strong enrichment at spindle poles. Localizes to the minus ends of spindle pole and aster microtubules in a dynein- and dynactin-dependent manner (By similarity).</text>
</comment>
<comment type="PTM">
    <text evidence="1">Phosphorylated during mitosis. Hyperphosphorylated upon assembly of microtubules (By similarity).</text>
</comment>
<comment type="similarity">
    <text evidence="3">Belongs to the TPX2 family.</text>
</comment>
<accession>A4IH24</accession>
<keyword id="KW-0131">Cell cycle</keyword>
<keyword id="KW-0132">Cell division</keyword>
<keyword id="KW-0963">Cytoplasm</keyword>
<keyword id="KW-0206">Cytoskeleton</keyword>
<keyword id="KW-0493">Microtubule</keyword>
<keyword id="KW-0498">Mitosis</keyword>
<keyword id="KW-0539">Nucleus</keyword>
<keyword id="KW-0597">Phosphoprotein</keyword>
<keyword id="KW-1185">Reference proteome</keyword>
<sequence>MAEAQDLYTFDAPSTFINFTAFHEDHGADSWFDKVTNAENIPPDQRRLSEIPAVNAEQNGMVEPEETSPSKETVSESAAHFSDGKSQARRSSRRMSRKHRQKLLVKMRETRLEKETAQSDCPPTKKLKGSSTKGARTPVIRGQPRSGHGSNTSPRPKAPLTLPSTPTVLKRKNVMVKPKSSEEQELERMQELQKEMLENLKKNEHSMKAAISGTGPSVKKSAVPITKPVDFHFKTDDRPKRVADQPKGEEYKEVDFAAALRKHPPSPVSKAALTVPKPFNLSKGKRKHEEASEFVSTAEQVISFSKKTPARYHLRSRQRELEGPSPVKMVRPKLTNPKTPLLQTKQRLRPVMCKSAAELEAEELERIQQYKFKAQELDSRILEGAQVLPRKPPVKEPTKAIGFDLEIEKRIQQREKRDEGEEEAFTFHSRPCPSKLLTEVVGVPLKKLLPVTVPHSPSFALKNRVRLPAREEKEEEVPAIKATAMPHYGVPFRPKLVQQRQVEVCPFSFSDQDRERLLRKEKRMEELRKEEVHKFKAQPLPEFGHVSLPEKRVKMPTQQEPFVLEIDKRGAPRLQRWQQQVKEEQKQQKEMAVFKARPNTVVHQEPFLPKKESRCLTATEGFELATEKRAKERQEFEKSLAEMEAQKSLLEEETRQRQEEEEREEISHLRKELVHKAQPIRKYKAVDVKASDTPLTIPESPNFSDRFKC</sequence>
<evidence type="ECO:0000250" key="1"/>
<evidence type="ECO:0000256" key="2">
    <source>
        <dbReference type="SAM" id="MobiDB-lite"/>
    </source>
</evidence>
<evidence type="ECO:0000305" key="3"/>